<proteinExistence type="inferred from homology"/>
<name>DPO41_MYCTO</name>
<organism>
    <name type="scientific">Mycobacterium tuberculosis (strain CDC 1551 / Oshkosh)</name>
    <dbReference type="NCBI Taxonomy" id="83331"/>
    <lineage>
        <taxon>Bacteria</taxon>
        <taxon>Bacillati</taxon>
        <taxon>Actinomycetota</taxon>
        <taxon>Actinomycetes</taxon>
        <taxon>Mycobacteriales</taxon>
        <taxon>Mycobacteriaceae</taxon>
        <taxon>Mycobacterium</taxon>
        <taxon>Mycobacterium tuberculosis complex</taxon>
    </lineage>
</organism>
<feature type="chain" id="PRO_0000427072" description="DNA polymerase IV 1">
    <location>
        <begin position="1"/>
        <end position="468"/>
    </location>
</feature>
<feature type="domain" description="UmuC">
    <location>
        <begin position="6"/>
        <end position="188"/>
    </location>
</feature>
<feature type="active site" evidence="1">
    <location>
        <position position="106"/>
    </location>
</feature>
<feature type="binding site" evidence="1">
    <location>
        <position position="10"/>
    </location>
    <ligand>
        <name>Mg(2+)</name>
        <dbReference type="ChEBI" id="CHEBI:18420"/>
    </ligand>
</feature>
<feature type="binding site" evidence="1">
    <location>
        <position position="105"/>
    </location>
    <ligand>
        <name>Mg(2+)</name>
        <dbReference type="ChEBI" id="CHEBI:18420"/>
    </ligand>
</feature>
<feature type="site" description="Substrate discrimination" evidence="1">
    <location>
        <position position="15"/>
    </location>
</feature>
<protein>
    <recommendedName>
        <fullName>DNA polymerase IV 1</fullName>
        <shortName>Pol IV 1</shortName>
        <ecNumber>2.7.7.7</ecNumber>
    </recommendedName>
</protein>
<gene>
    <name type="primary">dinB1</name>
    <name type="synonym">dinX</name>
    <name type="ordered locus">MT1589</name>
</gene>
<sequence>MESRWVLHLDMDAFFASVEQLTRPTLRGRPVLVGGLGGRGVVAGASYEARAYGARSAMPMHQARRLIGVTAVVLPPRGVVYGIASRRVFDTVRGLVPVVEQLSFDEAFAEPPQLAGAVAEDVETFCERLRRRVRDETGLIASVGAGSGKQIAKIASGLAKPDGIRVVRHAEEQALLSGLPVRRLWGIGPVAEEKLHRLGIETIGQLAALSDAEAANILGATIGPALHRLARGIDDRPVVERAEAKQISAESTFAVDLTTMEQLHEAIDSIAEHAHQRLLRDGRGARTITVKLKKSDMSTLTRSATMPYPTTDAGALFTVARRLLPDPLQIGPIRLLGVGFSGLSDIRQESLFADSDLTQETAAAHYVETPGAVVPAAHDATMWRVGDDVAHPELGHGWVQGAGHGVVTVRFETRGSGPGSARTFPVDTGDISNASPLDSLDWPDYIGQLSVEGSAGASAPTVDDVGDR</sequence>
<comment type="function">
    <text evidence="1">Poorly processive, error-prone DNA polymerase involved in untargeted mutagenesis. Copies undamaged DNA at stalled replication forks, which arise in vivo from mismatched or misaligned primer ends. These misaligned primers can be extended by PolIV. Exhibits no 3'-5' exonuclease (proofreading) activity. May be involved in translesional synthesis, in conjunction with the beta clamp from PolIII (By similarity).</text>
</comment>
<comment type="catalytic activity">
    <reaction>
        <text>DNA(n) + a 2'-deoxyribonucleoside 5'-triphosphate = DNA(n+1) + diphosphate</text>
        <dbReference type="Rhea" id="RHEA:22508"/>
        <dbReference type="Rhea" id="RHEA-COMP:17339"/>
        <dbReference type="Rhea" id="RHEA-COMP:17340"/>
        <dbReference type="ChEBI" id="CHEBI:33019"/>
        <dbReference type="ChEBI" id="CHEBI:61560"/>
        <dbReference type="ChEBI" id="CHEBI:173112"/>
        <dbReference type="EC" id="2.7.7.7"/>
    </reaction>
</comment>
<comment type="cofactor">
    <cofactor evidence="1">
        <name>Mg(2+)</name>
        <dbReference type="ChEBI" id="CHEBI:18420"/>
    </cofactor>
    <text evidence="1">Binds 2 magnesium ions per subunit.</text>
</comment>
<comment type="subunit">
    <text evidence="1">Monomer.</text>
</comment>
<comment type="subcellular location">
    <subcellularLocation>
        <location evidence="1">Cytoplasm</location>
    </subcellularLocation>
</comment>
<comment type="similarity">
    <text evidence="2">Belongs to the DNA polymerase type-Y family.</text>
</comment>
<comment type="sequence caution" evidence="2">
    <conflict type="erroneous initiation">
        <sequence resource="EMBL-CDS" id="AAK45855"/>
    </conflict>
    <text>Extended N-terminus.</text>
</comment>
<dbReference type="EC" id="2.7.7.7"/>
<dbReference type="EMBL" id="AE000516">
    <property type="protein sequence ID" value="AAK45855.1"/>
    <property type="status" value="ALT_INIT"/>
    <property type="molecule type" value="Genomic_DNA"/>
</dbReference>
<dbReference type="PIR" id="F70760">
    <property type="entry name" value="F70760"/>
</dbReference>
<dbReference type="SMR" id="P9WNT2"/>
<dbReference type="KEGG" id="mtc:MT1589"/>
<dbReference type="HOGENOM" id="CLU_012348_1_0_11"/>
<dbReference type="Proteomes" id="UP000001020">
    <property type="component" value="Chromosome"/>
</dbReference>
<dbReference type="GO" id="GO:0005829">
    <property type="term" value="C:cytosol"/>
    <property type="evidence" value="ECO:0007669"/>
    <property type="project" value="TreeGrafter"/>
</dbReference>
<dbReference type="GO" id="GO:0003684">
    <property type="term" value="F:damaged DNA binding"/>
    <property type="evidence" value="ECO:0007669"/>
    <property type="project" value="InterPro"/>
</dbReference>
<dbReference type="GO" id="GO:0003887">
    <property type="term" value="F:DNA-directed DNA polymerase activity"/>
    <property type="evidence" value="ECO:0007669"/>
    <property type="project" value="UniProtKB-UniRule"/>
</dbReference>
<dbReference type="GO" id="GO:0000287">
    <property type="term" value="F:magnesium ion binding"/>
    <property type="evidence" value="ECO:0007669"/>
    <property type="project" value="UniProtKB-UniRule"/>
</dbReference>
<dbReference type="GO" id="GO:0006261">
    <property type="term" value="P:DNA-templated DNA replication"/>
    <property type="evidence" value="ECO:0007669"/>
    <property type="project" value="UniProtKB-UniRule"/>
</dbReference>
<dbReference type="GO" id="GO:0042276">
    <property type="term" value="P:error-prone translesion synthesis"/>
    <property type="evidence" value="ECO:0007669"/>
    <property type="project" value="TreeGrafter"/>
</dbReference>
<dbReference type="GO" id="GO:0009432">
    <property type="term" value="P:SOS response"/>
    <property type="evidence" value="ECO:0007669"/>
    <property type="project" value="TreeGrafter"/>
</dbReference>
<dbReference type="CDD" id="cd03586">
    <property type="entry name" value="PolY_Pol_IV_kappa"/>
    <property type="match status" value="1"/>
</dbReference>
<dbReference type="FunFam" id="1.10.150.20:FF:000068">
    <property type="entry name" value="DNA polymerase IV"/>
    <property type="match status" value="1"/>
</dbReference>
<dbReference type="FunFam" id="3.30.1490.100:FF:000020">
    <property type="entry name" value="DNA polymerase IV"/>
    <property type="match status" value="1"/>
</dbReference>
<dbReference type="Gene3D" id="3.30.70.270">
    <property type="match status" value="1"/>
</dbReference>
<dbReference type="Gene3D" id="3.40.1170.60">
    <property type="match status" value="1"/>
</dbReference>
<dbReference type="Gene3D" id="1.10.150.20">
    <property type="entry name" value="5' to 3' exonuclease, C-terminal subdomain"/>
    <property type="match status" value="1"/>
</dbReference>
<dbReference type="Gene3D" id="3.30.1490.100">
    <property type="entry name" value="DNA polymerase, Y-family, little finger domain"/>
    <property type="match status" value="1"/>
</dbReference>
<dbReference type="HAMAP" id="MF_01113">
    <property type="entry name" value="DNApol_IV"/>
    <property type="match status" value="1"/>
</dbReference>
<dbReference type="InterPro" id="IPR043502">
    <property type="entry name" value="DNA/RNA_pol_sf"/>
</dbReference>
<dbReference type="InterPro" id="IPR036775">
    <property type="entry name" value="DNA_pol_Y-fam_lit_finger_sf"/>
</dbReference>
<dbReference type="InterPro" id="IPR017961">
    <property type="entry name" value="DNA_pol_Y-fam_little_finger"/>
</dbReference>
<dbReference type="InterPro" id="IPR050116">
    <property type="entry name" value="DNA_polymerase-Y"/>
</dbReference>
<dbReference type="InterPro" id="IPR022880">
    <property type="entry name" value="DNApol_IV"/>
</dbReference>
<dbReference type="InterPro" id="IPR024728">
    <property type="entry name" value="PolY_HhH_motif"/>
</dbReference>
<dbReference type="InterPro" id="IPR043128">
    <property type="entry name" value="Rev_trsase/Diguanyl_cyclase"/>
</dbReference>
<dbReference type="InterPro" id="IPR001126">
    <property type="entry name" value="UmuC"/>
</dbReference>
<dbReference type="NCBIfam" id="NF002677">
    <property type="entry name" value="PRK02406.1"/>
    <property type="match status" value="1"/>
</dbReference>
<dbReference type="NCBIfam" id="NF002882">
    <property type="entry name" value="PRK03348.1"/>
    <property type="match status" value="1"/>
</dbReference>
<dbReference type="PANTHER" id="PTHR11076:SF33">
    <property type="entry name" value="DNA POLYMERASE KAPPA"/>
    <property type="match status" value="1"/>
</dbReference>
<dbReference type="PANTHER" id="PTHR11076">
    <property type="entry name" value="DNA REPAIR POLYMERASE UMUC / TRANSFERASE FAMILY MEMBER"/>
    <property type="match status" value="1"/>
</dbReference>
<dbReference type="Pfam" id="PF00817">
    <property type="entry name" value="IMS"/>
    <property type="match status" value="1"/>
</dbReference>
<dbReference type="Pfam" id="PF11799">
    <property type="entry name" value="IMS_C"/>
    <property type="match status" value="1"/>
</dbReference>
<dbReference type="Pfam" id="PF11798">
    <property type="entry name" value="IMS_HHH"/>
    <property type="match status" value="1"/>
</dbReference>
<dbReference type="SUPFAM" id="SSF56672">
    <property type="entry name" value="DNA/RNA polymerases"/>
    <property type="match status" value="1"/>
</dbReference>
<dbReference type="SUPFAM" id="SSF100879">
    <property type="entry name" value="Lesion bypass DNA polymerase (Y-family), little finger domain"/>
    <property type="match status" value="1"/>
</dbReference>
<dbReference type="PROSITE" id="PS50173">
    <property type="entry name" value="UMUC"/>
    <property type="match status" value="1"/>
</dbReference>
<reference key="1">
    <citation type="journal article" date="2002" name="J. Bacteriol.">
        <title>Whole-genome comparison of Mycobacterium tuberculosis clinical and laboratory strains.</title>
        <authorList>
            <person name="Fleischmann R.D."/>
            <person name="Alland D."/>
            <person name="Eisen J.A."/>
            <person name="Carpenter L."/>
            <person name="White O."/>
            <person name="Peterson J.D."/>
            <person name="DeBoy R.T."/>
            <person name="Dodson R.J."/>
            <person name="Gwinn M.L."/>
            <person name="Haft D.H."/>
            <person name="Hickey E.K."/>
            <person name="Kolonay J.F."/>
            <person name="Nelson W.C."/>
            <person name="Umayam L.A."/>
            <person name="Ermolaeva M.D."/>
            <person name="Salzberg S.L."/>
            <person name="Delcher A."/>
            <person name="Utterback T.R."/>
            <person name="Weidman J.F."/>
            <person name="Khouri H.M."/>
            <person name="Gill J."/>
            <person name="Mikula A."/>
            <person name="Bishai W."/>
            <person name="Jacobs W.R. Jr."/>
            <person name="Venter J.C."/>
            <person name="Fraser C.M."/>
        </authorList>
    </citation>
    <scope>NUCLEOTIDE SEQUENCE [LARGE SCALE GENOMIC DNA]</scope>
    <source>
        <strain>CDC 1551 / Oshkosh</strain>
    </source>
</reference>
<evidence type="ECO:0000250" key="1"/>
<evidence type="ECO:0000305" key="2"/>
<keyword id="KW-0963">Cytoplasm</keyword>
<keyword id="KW-0227">DNA damage</keyword>
<keyword id="KW-0234">DNA repair</keyword>
<keyword id="KW-0235">DNA replication</keyword>
<keyword id="KW-0238">DNA-binding</keyword>
<keyword id="KW-0239">DNA-directed DNA polymerase</keyword>
<keyword id="KW-0460">Magnesium</keyword>
<keyword id="KW-0479">Metal-binding</keyword>
<keyword id="KW-0515">Mutator protein</keyword>
<keyword id="KW-0548">Nucleotidyltransferase</keyword>
<keyword id="KW-1185">Reference proteome</keyword>
<keyword id="KW-0808">Transferase</keyword>
<accession>P9WNT2</accession>
<accession>L0T6Y5</accession>
<accession>P63985</accession>
<accession>Q10787</accession>